<proteinExistence type="evidence at protein level"/>
<accession>Q9H869</accession>
<accession>B0QZ54</accession>
<accession>B4DMP2</accession>
<accession>B4E0I0</accession>
<accession>D3DV96</accession>
<accession>D3DV98</accession>
<accession>H7BY62</accession>
<accession>Q5VYZ1</accession>
<accession>Q5VYZ4</accession>
<accession>Q5VYZ7</accession>
<accession>Q7L4C3</accession>
<accession>Q7L5E2</accession>
<accession>Q8IXA6</accession>
<accession>Q8TEW5</accession>
<accession>Q8TF04</accession>
<accession>Q96HB6</accession>
<accession>Q9BQ64</accession>
<accession>Q9NV84</accession>
<reference key="1">
    <citation type="journal article" date="2001" name="Br. J. Cancer Suppl.">
        <title>Identification and characterization of a novel human hepatocellular carcinoma-associated gene.</title>
        <authorList>
            <person name="Wang Z.-X."/>
            <person name="Wang H.-Y."/>
            <person name="Wu M.-C."/>
        </authorList>
    </citation>
    <scope>NUCLEOTIDE SEQUENCE [MRNA] (ISOFORM 7)</scope>
    <scope>SUBCELLULAR LOCATION</scope>
    <scope>TISSUE SPECIFICITY</scope>
    <source>
        <tissue>Placenta</tissue>
    </source>
</reference>
<reference key="2">
    <citation type="journal article" date="2004" name="J. Biol. Chem.">
        <title>YY1AP, a novel co-activator of YY1.</title>
        <authorList>
            <person name="Wang C.-Y."/>
            <person name="Liang Y.-J."/>
            <person name="Lin Y.-S."/>
            <person name="Shih H.-M."/>
            <person name="Jou Y.-S."/>
            <person name="Yu W.C.Y."/>
        </authorList>
    </citation>
    <scope>NUCLEOTIDE SEQUENCE [MRNA] (ISOFORM 2)</scope>
    <scope>FUNCTION</scope>
    <scope>SUBCELLULAR LOCATION</scope>
    <scope>INTERACTION WITH YY1</scope>
    <scope>TISSUE SPECIFICITY</scope>
    <source>
        <tissue>Cervix carcinoma</tissue>
    </source>
</reference>
<reference key="3">
    <citation type="journal article" date="2002" name="Oncogene">
        <title>Molecular cloning and characterization of a novel gene which is highly expressed in hepatocellular carcinoma.</title>
        <authorList>
            <person name="Zeng J.Z."/>
            <person name="Wang H.-Y."/>
            <person name="Chen Z.J."/>
            <person name="Ullrich A."/>
            <person name="Wu M.-C."/>
        </authorList>
    </citation>
    <scope>NUCLEOTIDE SEQUENCE [MRNA] (ISOFORM 6)</scope>
    <scope>SUBCELLULAR LOCATION</scope>
    <scope>TISSUE SPECIFICITY</scope>
    <source>
        <tissue>Placenta</tissue>
    </source>
</reference>
<reference key="4">
    <citation type="journal article" date="2004" name="Nat. Genet.">
        <title>Complete sequencing and characterization of 21,243 full-length human cDNAs.</title>
        <authorList>
            <person name="Ota T."/>
            <person name="Suzuki Y."/>
            <person name="Nishikawa T."/>
            <person name="Otsuki T."/>
            <person name="Sugiyama T."/>
            <person name="Irie R."/>
            <person name="Wakamatsu A."/>
            <person name="Hayashi K."/>
            <person name="Sato H."/>
            <person name="Nagai K."/>
            <person name="Kimura K."/>
            <person name="Makita H."/>
            <person name="Sekine M."/>
            <person name="Obayashi M."/>
            <person name="Nishi T."/>
            <person name="Shibahara T."/>
            <person name="Tanaka T."/>
            <person name="Ishii S."/>
            <person name="Yamamoto J."/>
            <person name="Saito K."/>
            <person name="Kawai Y."/>
            <person name="Isono Y."/>
            <person name="Nakamura Y."/>
            <person name="Nagahari K."/>
            <person name="Murakami K."/>
            <person name="Yasuda T."/>
            <person name="Iwayanagi T."/>
            <person name="Wagatsuma M."/>
            <person name="Shiratori A."/>
            <person name="Sudo H."/>
            <person name="Hosoiri T."/>
            <person name="Kaku Y."/>
            <person name="Kodaira H."/>
            <person name="Kondo H."/>
            <person name="Sugawara M."/>
            <person name="Takahashi M."/>
            <person name="Kanda K."/>
            <person name="Yokoi T."/>
            <person name="Furuya T."/>
            <person name="Kikkawa E."/>
            <person name="Omura Y."/>
            <person name="Abe K."/>
            <person name="Kamihara K."/>
            <person name="Katsuta N."/>
            <person name="Sato K."/>
            <person name="Tanikawa M."/>
            <person name="Yamazaki M."/>
            <person name="Ninomiya K."/>
            <person name="Ishibashi T."/>
            <person name="Yamashita H."/>
            <person name="Murakawa K."/>
            <person name="Fujimori K."/>
            <person name="Tanai H."/>
            <person name="Kimata M."/>
            <person name="Watanabe M."/>
            <person name="Hiraoka S."/>
            <person name="Chiba Y."/>
            <person name="Ishida S."/>
            <person name="Ono Y."/>
            <person name="Takiguchi S."/>
            <person name="Watanabe S."/>
            <person name="Yosida M."/>
            <person name="Hotuta T."/>
            <person name="Kusano J."/>
            <person name="Kanehori K."/>
            <person name="Takahashi-Fujii A."/>
            <person name="Hara H."/>
            <person name="Tanase T.-O."/>
            <person name="Nomura Y."/>
            <person name="Togiya S."/>
            <person name="Komai F."/>
            <person name="Hara R."/>
            <person name="Takeuchi K."/>
            <person name="Arita M."/>
            <person name="Imose N."/>
            <person name="Musashino K."/>
            <person name="Yuuki H."/>
            <person name="Oshima A."/>
            <person name="Sasaki N."/>
            <person name="Aotsuka S."/>
            <person name="Yoshikawa Y."/>
            <person name="Matsunawa H."/>
            <person name="Ichihara T."/>
            <person name="Shiohata N."/>
            <person name="Sano S."/>
            <person name="Moriya S."/>
            <person name="Momiyama H."/>
            <person name="Satoh N."/>
            <person name="Takami S."/>
            <person name="Terashima Y."/>
            <person name="Suzuki O."/>
            <person name="Nakagawa S."/>
            <person name="Senoh A."/>
            <person name="Mizoguchi H."/>
            <person name="Goto Y."/>
            <person name="Shimizu F."/>
            <person name="Wakebe H."/>
            <person name="Hishigaki H."/>
            <person name="Watanabe T."/>
            <person name="Sugiyama A."/>
            <person name="Takemoto M."/>
            <person name="Kawakami B."/>
            <person name="Yamazaki M."/>
            <person name="Watanabe K."/>
            <person name="Kumagai A."/>
            <person name="Itakura S."/>
            <person name="Fukuzumi Y."/>
            <person name="Fujimori Y."/>
            <person name="Komiyama M."/>
            <person name="Tashiro H."/>
            <person name="Tanigami A."/>
            <person name="Fujiwara T."/>
            <person name="Ono T."/>
            <person name="Yamada K."/>
            <person name="Fujii Y."/>
            <person name="Ozaki K."/>
            <person name="Hirao M."/>
            <person name="Ohmori Y."/>
            <person name="Kawabata A."/>
            <person name="Hikiji T."/>
            <person name="Kobatake N."/>
            <person name="Inagaki H."/>
            <person name="Ikema Y."/>
            <person name="Okamoto S."/>
            <person name="Okitani R."/>
            <person name="Kawakami T."/>
            <person name="Noguchi S."/>
            <person name="Itoh T."/>
            <person name="Shigeta K."/>
            <person name="Senba T."/>
            <person name="Matsumura K."/>
            <person name="Nakajima Y."/>
            <person name="Mizuno T."/>
            <person name="Morinaga M."/>
            <person name="Sasaki M."/>
            <person name="Togashi T."/>
            <person name="Oyama M."/>
            <person name="Hata H."/>
            <person name="Watanabe M."/>
            <person name="Komatsu T."/>
            <person name="Mizushima-Sugano J."/>
            <person name="Satoh T."/>
            <person name="Shirai Y."/>
            <person name="Takahashi Y."/>
            <person name="Nakagawa K."/>
            <person name="Okumura K."/>
            <person name="Nagase T."/>
            <person name="Nomura N."/>
            <person name="Kikuchi H."/>
            <person name="Masuho Y."/>
            <person name="Yamashita R."/>
            <person name="Nakai K."/>
            <person name="Yada T."/>
            <person name="Nakamura Y."/>
            <person name="Ohara O."/>
            <person name="Isogai T."/>
            <person name="Sugano S."/>
        </authorList>
    </citation>
    <scope>NUCLEOTIDE SEQUENCE [LARGE SCALE MRNA] (ISOFORMS 1; 3 AND 9)</scope>
    <source>
        <tissue>Brain</tissue>
        <tissue>Retinoblastoma</tissue>
        <tissue>Teratocarcinoma</tissue>
        <tissue>Thymus</tissue>
    </source>
</reference>
<reference key="5">
    <citation type="journal article" date="2006" name="Nature">
        <title>The DNA sequence and biological annotation of human chromosome 1.</title>
        <authorList>
            <person name="Gregory S.G."/>
            <person name="Barlow K.F."/>
            <person name="McLay K.E."/>
            <person name="Kaul R."/>
            <person name="Swarbreck D."/>
            <person name="Dunham A."/>
            <person name="Scott C.E."/>
            <person name="Howe K.L."/>
            <person name="Woodfine K."/>
            <person name="Spencer C.C.A."/>
            <person name="Jones M.C."/>
            <person name="Gillson C."/>
            <person name="Searle S."/>
            <person name="Zhou Y."/>
            <person name="Kokocinski F."/>
            <person name="McDonald L."/>
            <person name="Evans R."/>
            <person name="Phillips K."/>
            <person name="Atkinson A."/>
            <person name="Cooper R."/>
            <person name="Jones C."/>
            <person name="Hall R.E."/>
            <person name="Andrews T.D."/>
            <person name="Lloyd C."/>
            <person name="Ainscough R."/>
            <person name="Almeida J.P."/>
            <person name="Ambrose K.D."/>
            <person name="Anderson F."/>
            <person name="Andrew R.W."/>
            <person name="Ashwell R.I.S."/>
            <person name="Aubin K."/>
            <person name="Babbage A.K."/>
            <person name="Bagguley C.L."/>
            <person name="Bailey J."/>
            <person name="Beasley H."/>
            <person name="Bethel G."/>
            <person name="Bird C.P."/>
            <person name="Bray-Allen S."/>
            <person name="Brown J.Y."/>
            <person name="Brown A.J."/>
            <person name="Buckley D."/>
            <person name="Burton J."/>
            <person name="Bye J."/>
            <person name="Carder C."/>
            <person name="Chapman J.C."/>
            <person name="Clark S.Y."/>
            <person name="Clarke G."/>
            <person name="Clee C."/>
            <person name="Cobley V."/>
            <person name="Collier R.E."/>
            <person name="Corby N."/>
            <person name="Coville G.J."/>
            <person name="Davies J."/>
            <person name="Deadman R."/>
            <person name="Dunn M."/>
            <person name="Earthrowl M."/>
            <person name="Ellington A.G."/>
            <person name="Errington H."/>
            <person name="Frankish A."/>
            <person name="Frankland J."/>
            <person name="French L."/>
            <person name="Garner P."/>
            <person name="Garnett J."/>
            <person name="Gay L."/>
            <person name="Ghori M.R.J."/>
            <person name="Gibson R."/>
            <person name="Gilby L.M."/>
            <person name="Gillett W."/>
            <person name="Glithero R.J."/>
            <person name="Grafham D.V."/>
            <person name="Griffiths C."/>
            <person name="Griffiths-Jones S."/>
            <person name="Grocock R."/>
            <person name="Hammond S."/>
            <person name="Harrison E.S.I."/>
            <person name="Hart E."/>
            <person name="Haugen E."/>
            <person name="Heath P.D."/>
            <person name="Holmes S."/>
            <person name="Holt K."/>
            <person name="Howden P.J."/>
            <person name="Hunt A.R."/>
            <person name="Hunt S.E."/>
            <person name="Hunter G."/>
            <person name="Isherwood J."/>
            <person name="James R."/>
            <person name="Johnson C."/>
            <person name="Johnson D."/>
            <person name="Joy A."/>
            <person name="Kay M."/>
            <person name="Kershaw J.K."/>
            <person name="Kibukawa M."/>
            <person name="Kimberley A.M."/>
            <person name="King A."/>
            <person name="Knights A.J."/>
            <person name="Lad H."/>
            <person name="Laird G."/>
            <person name="Lawlor S."/>
            <person name="Leongamornlert D.A."/>
            <person name="Lloyd D.M."/>
            <person name="Loveland J."/>
            <person name="Lovell J."/>
            <person name="Lush M.J."/>
            <person name="Lyne R."/>
            <person name="Martin S."/>
            <person name="Mashreghi-Mohammadi M."/>
            <person name="Matthews L."/>
            <person name="Matthews N.S.W."/>
            <person name="McLaren S."/>
            <person name="Milne S."/>
            <person name="Mistry S."/>
            <person name="Moore M.J.F."/>
            <person name="Nickerson T."/>
            <person name="O'Dell C.N."/>
            <person name="Oliver K."/>
            <person name="Palmeiri A."/>
            <person name="Palmer S.A."/>
            <person name="Parker A."/>
            <person name="Patel D."/>
            <person name="Pearce A.V."/>
            <person name="Peck A.I."/>
            <person name="Pelan S."/>
            <person name="Phelps K."/>
            <person name="Phillimore B.J."/>
            <person name="Plumb R."/>
            <person name="Rajan J."/>
            <person name="Raymond C."/>
            <person name="Rouse G."/>
            <person name="Saenphimmachak C."/>
            <person name="Sehra H.K."/>
            <person name="Sheridan E."/>
            <person name="Shownkeen R."/>
            <person name="Sims S."/>
            <person name="Skuce C.D."/>
            <person name="Smith M."/>
            <person name="Steward C."/>
            <person name="Subramanian S."/>
            <person name="Sycamore N."/>
            <person name="Tracey A."/>
            <person name="Tromans A."/>
            <person name="Van Helmond Z."/>
            <person name="Wall M."/>
            <person name="Wallis J.M."/>
            <person name="White S."/>
            <person name="Whitehead S.L."/>
            <person name="Wilkinson J.E."/>
            <person name="Willey D.L."/>
            <person name="Williams H."/>
            <person name="Wilming L."/>
            <person name="Wray P.W."/>
            <person name="Wu Z."/>
            <person name="Coulson A."/>
            <person name="Vaudin M."/>
            <person name="Sulston J.E."/>
            <person name="Durbin R.M."/>
            <person name="Hubbard T."/>
            <person name="Wooster R."/>
            <person name="Dunham I."/>
            <person name="Carter N.P."/>
            <person name="McVean G."/>
            <person name="Ross M.T."/>
            <person name="Harrow J."/>
            <person name="Olson M.V."/>
            <person name="Beck S."/>
            <person name="Rogers J."/>
            <person name="Bentley D.R."/>
        </authorList>
    </citation>
    <scope>NUCLEOTIDE SEQUENCE [LARGE SCALE GENOMIC DNA]</scope>
</reference>
<reference key="6">
    <citation type="submission" date="2005-09" db="EMBL/GenBank/DDBJ databases">
        <authorList>
            <person name="Mural R.J."/>
            <person name="Istrail S."/>
            <person name="Sutton G.G."/>
            <person name="Florea L."/>
            <person name="Halpern A.L."/>
            <person name="Mobarry C.M."/>
            <person name="Lippert R."/>
            <person name="Walenz B."/>
            <person name="Shatkay H."/>
            <person name="Dew I."/>
            <person name="Miller J.R."/>
            <person name="Flanigan M.J."/>
            <person name="Edwards N.J."/>
            <person name="Bolanos R."/>
            <person name="Fasulo D."/>
            <person name="Halldorsson B.V."/>
            <person name="Hannenhalli S."/>
            <person name="Turner R."/>
            <person name="Yooseph S."/>
            <person name="Lu F."/>
            <person name="Nusskern D.R."/>
            <person name="Shue B.C."/>
            <person name="Zheng X.H."/>
            <person name="Zhong F."/>
            <person name="Delcher A.L."/>
            <person name="Huson D.H."/>
            <person name="Kravitz S.A."/>
            <person name="Mouchard L."/>
            <person name="Reinert K."/>
            <person name="Remington K.A."/>
            <person name="Clark A.G."/>
            <person name="Waterman M.S."/>
            <person name="Eichler E.E."/>
            <person name="Adams M.D."/>
            <person name="Hunkapiller M.W."/>
            <person name="Myers E.W."/>
            <person name="Venter J.C."/>
        </authorList>
    </citation>
    <scope>NUCLEOTIDE SEQUENCE [LARGE SCALE GENOMIC DNA]</scope>
</reference>
<reference key="7">
    <citation type="journal article" date="2004" name="Genome Res.">
        <title>The status, quality, and expansion of the NIH full-length cDNA project: the Mammalian Gene Collection (MGC).</title>
        <authorList>
            <consortium name="The MGC Project Team"/>
        </authorList>
    </citation>
    <scope>NUCLEOTIDE SEQUENCE [LARGE SCALE MRNA] (ISOFORMS 2; 3; 4; 5 AND 8)</scope>
    <source>
        <tissue>Colon</tissue>
        <tissue>Lung</tissue>
        <tissue>Muscle</tissue>
        <tissue>Skin</tissue>
        <tissue>Uterus</tissue>
    </source>
</reference>
<reference key="8">
    <citation type="journal article" date="2007" name="Mol. Cell. Biochem.">
        <title>Hepatocellular carcinoma-associated gene 2 interacts with MAD2L2.</title>
        <authorList>
            <person name="Li L."/>
            <person name="Shi Y."/>
            <person name="Wu H."/>
            <person name="Wan B."/>
            <person name="Li P."/>
            <person name="Zhou L."/>
            <person name="Shi H."/>
            <person name="Huo K."/>
        </authorList>
    </citation>
    <scope>FUNCTION</scope>
    <scope>INTERACTION WITH MAD2L2</scope>
    <scope>SUBCELLULAR LOCATION</scope>
</reference>
<reference key="9">
    <citation type="journal article" date="2008" name="Proc. Natl. Acad. Sci. U.S.A.">
        <title>A quantitative atlas of mitotic phosphorylation.</title>
        <authorList>
            <person name="Dephoure N."/>
            <person name="Zhou C."/>
            <person name="Villen J."/>
            <person name="Beausoleil S.A."/>
            <person name="Bakalarski C.E."/>
            <person name="Elledge S.J."/>
            <person name="Gygi S.P."/>
        </authorList>
    </citation>
    <scope>IDENTIFICATION BY MASS SPECTROMETRY [LARGE SCALE ANALYSIS]</scope>
    <source>
        <tissue>Cervix carcinoma</tissue>
    </source>
</reference>
<reference key="10">
    <citation type="journal article" date="2013" name="J. Proteome Res.">
        <title>Toward a comprehensive characterization of a human cancer cell phosphoproteome.</title>
        <authorList>
            <person name="Zhou H."/>
            <person name="Di Palma S."/>
            <person name="Preisinger C."/>
            <person name="Peng M."/>
            <person name="Polat A.N."/>
            <person name="Heck A.J."/>
            <person name="Mohammed S."/>
        </authorList>
    </citation>
    <scope>PHOSPHORYLATION [LARGE SCALE ANALYSIS] AT SER-724</scope>
    <scope>IDENTIFICATION BY MASS SPECTROMETRY [LARGE SCALE ANALYSIS]</scope>
    <source>
        <tissue>Cervix carcinoma</tissue>
        <tissue>Erythroleukemia</tissue>
    </source>
</reference>
<reference key="11">
    <citation type="journal article" date="2017" name="Am. J. Hum. Genet.">
        <title>Loss-of-function mutations in YY1AP1 lead to Grange Syndrome and a fibromuscular dysplasia-like vascular disease.</title>
        <authorList>
            <consortium name="University of Washington Center for Mendelian Genomics"/>
            <person name="Guo D.C."/>
            <person name="Duan X.Y."/>
            <person name="Regalado E.S."/>
            <person name="Mellor-Crummey L."/>
            <person name="Kwartler C.S."/>
            <person name="Kim D."/>
            <person name="Lieberman K."/>
            <person name="de Vries B.B."/>
            <person name="Pfundt R."/>
            <person name="Schinzel A."/>
            <person name="Kotzot D."/>
            <person name="Shen X."/>
            <person name="Yang M.L."/>
            <person name="Bamshad M.J."/>
            <person name="Nickerson D.A."/>
            <person name="Gornik H.L."/>
            <person name="Ganesh S.K."/>
            <person name="Braverman A.C."/>
            <person name="Grange D.K."/>
            <person name="Milewicz D.M."/>
        </authorList>
    </citation>
    <scope>FUNCTION</scope>
    <scope>INTERACTION WITH INO80</scope>
    <scope>SUBCELLULAR LOCATION</scope>
    <scope>INVOLVEMENT IN GRNG</scope>
    <scope>VARIANTS GRNG 150-GLN--LEU-796 DEL; 170-GLN--LEU-796 DEL; 705-LEU--LEU-796 DEL AND 709-GLU--LEU-796 DEL</scope>
</reference>
<feature type="chain" id="PRO_0000076369" description="YY1-associated protein 1">
    <location>
        <begin position="1"/>
        <end position="796"/>
    </location>
</feature>
<feature type="region of interest" description="Disordered" evidence="1">
    <location>
        <begin position="1"/>
        <end position="45"/>
    </location>
</feature>
<feature type="region of interest" description="Disordered" evidence="1">
    <location>
        <begin position="463"/>
        <end position="488"/>
    </location>
</feature>
<feature type="region of interest" description="Disordered" evidence="1">
    <location>
        <begin position="755"/>
        <end position="776"/>
    </location>
</feature>
<feature type="compositionally biased region" description="Basic and acidic residues" evidence="1">
    <location>
        <begin position="23"/>
        <end position="36"/>
    </location>
</feature>
<feature type="compositionally biased region" description="Low complexity" evidence="1">
    <location>
        <begin position="463"/>
        <end position="472"/>
    </location>
</feature>
<feature type="compositionally biased region" description="Polar residues" evidence="1">
    <location>
        <begin position="473"/>
        <end position="485"/>
    </location>
</feature>
<feature type="compositionally biased region" description="Polar residues" evidence="1">
    <location>
        <begin position="765"/>
        <end position="774"/>
    </location>
</feature>
<feature type="modified residue" description="Phosphoserine" evidence="14">
    <location>
        <position position="724"/>
    </location>
</feature>
<feature type="splice variant" id="VSP_016585" description="In isoform 7." evidence="7">
    <location>
        <begin position="1"/>
        <end position="329"/>
    </location>
</feature>
<feature type="splice variant" id="VSP_016586" description="In isoform 5." evidence="11">
    <location>
        <begin position="1"/>
        <end position="132"/>
    </location>
</feature>
<feature type="splice variant" id="VSP_016587" description="In isoform 3 and isoform 6." evidence="8 9 11">
    <location>
        <begin position="1"/>
        <end position="77"/>
    </location>
</feature>
<feature type="splice variant" id="VSP_016588" description="In isoform 2 and isoform 4." evidence="10 11">
    <location>
        <begin position="1"/>
        <end position="66"/>
    </location>
</feature>
<feature type="splice variant" id="VSP_046858" description="In isoform 8 and isoform 9." evidence="9 11">
    <original>MEEEASRSAAATNPG</original>
    <variation>MAGVGRSGGPWGRTRGGRSGRLGVSLGALSSLPLEELPRPLCCRRCRRHFGFALRGETIPVSVAGSASSQFAPLALHLSLLLSRISA</variation>
    <location>
        <begin position="1"/>
        <end position="15"/>
    </location>
</feature>
<feature type="splice variant" id="VSP_016589" description="In isoform 2, isoform 3, isoform 5 and isoform 9." evidence="9 10 11">
    <original>N</original>
    <variation>NLLALGLKHFEGTEFLNPLIS</variation>
    <location>
        <position position="309"/>
    </location>
</feature>
<feature type="sequence variant" id="VAR_078760" description="In GRNG." evidence="6">
    <location>
        <begin position="150"/>
        <end position="796"/>
    </location>
</feature>
<feature type="sequence variant" id="VAR_078761" description="In GRNG." evidence="6">
    <location>
        <begin position="170"/>
        <end position="796"/>
    </location>
</feature>
<feature type="sequence variant" id="VAR_051497" description="In dbSNP:rs35098429.">
    <original>G</original>
    <variation>S</variation>
    <location>
        <position position="412"/>
    </location>
</feature>
<feature type="sequence variant" id="VAR_078762" description="In GRNG." evidence="6">
    <location>
        <begin position="705"/>
        <end position="796"/>
    </location>
</feature>
<feature type="sequence variant" id="VAR_078763" description="In GRNG." evidence="6">
    <location>
        <begin position="709"/>
        <end position="796"/>
    </location>
</feature>
<feature type="sequence variant" id="VAR_051498" description="In dbSNP:rs7539.">
    <original>E</original>
    <variation>Q</variation>
    <location>
        <position position="786"/>
    </location>
</feature>
<feature type="sequence conflict" description="In Ref. 4; BAB14748." evidence="12" ref="4">
    <original>R</original>
    <variation>Q</variation>
    <location>
        <position position="27"/>
    </location>
</feature>
<feature type="sequence conflict" description="In Ref. 4; BAG59954." evidence="12" ref="4">
    <original>H</original>
    <variation>R</variation>
    <location>
        <position position="498"/>
    </location>
</feature>
<feature type="sequence conflict" description="In Ref. 1." evidence="12" ref="1">
    <original>P</original>
    <variation>L</variation>
    <location>
        <position position="541"/>
    </location>
</feature>
<feature type="sequence conflict" description="In Ref. 7; AAH01655/AAH01843." evidence="12" ref="7">
    <original>P</original>
    <variation>L</variation>
    <location>
        <position position="553"/>
    </location>
</feature>
<evidence type="ECO:0000256" key="1">
    <source>
        <dbReference type="SAM" id="MobiDB-lite"/>
    </source>
</evidence>
<evidence type="ECO:0000269" key="2">
    <source>
    </source>
</evidence>
<evidence type="ECO:0000269" key="3">
    <source>
    </source>
</evidence>
<evidence type="ECO:0000269" key="4">
    <source>
    </source>
</evidence>
<evidence type="ECO:0000269" key="5">
    <source>
    </source>
</evidence>
<evidence type="ECO:0000269" key="6">
    <source>
    </source>
</evidence>
<evidence type="ECO:0000303" key="7">
    <source>
    </source>
</evidence>
<evidence type="ECO:0000303" key="8">
    <source>
    </source>
</evidence>
<evidence type="ECO:0000303" key="9">
    <source>
    </source>
</evidence>
<evidence type="ECO:0000303" key="10">
    <source>
    </source>
</evidence>
<evidence type="ECO:0000303" key="11">
    <source>
    </source>
</evidence>
<evidence type="ECO:0000305" key="12"/>
<evidence type="ECO:0000312" key="13">
    <source>
        <dbReference type="HGNC" id="HGNC:30935"/>
    </source>
</evidence>
<evidence type="ECO:0007744" key="14">
    <source>
    </source>
</evidence>
<comment type="function">
    <text evidence="4 5 6">Associates with the INO80 chromatin remodeling complex, which is responsible for transcriptional regulation, DNA repair, and replication (PubMed:27939641). Enhances transcription activation by YY1 (PubMed:14744866). Plays a role in cell cycle regulation (PubMed:17541814, PubMed:27939641).</text>
</comment>
<comment type="subunit">
    <text evidence="4 5 6">Interacts with YY1. Interacts with MAD2L2. Interacts with INO80.</text>
</comment>
<comment type="interaction">
    <interactant intactId="EBI-946122">
        <id>Q9H869</id>
    </interactant>
    <interactant intactId="EBI-930964">
        <id>P54253</id>
        <label>ATXN1</label>
    </interactant>
    <organismsDiffer>false</organismsDiffer>
    <experiments>4</experiments>
</comment>
<comment type="interaction">
    <interactant intactId="EBI-946122">
        <id>Q9H869</id>
    </interactant>
    <interactant intactId="EBI-765538">
        <id>P25490</id>
        <label>YY1</label>
    </interactant>
    <organismsDiffer>false</organismsDiffer>
    <experiments>5</experiments>
</comment>
<comment type="interaction">
    <interactant intactId="EBI-12150045">
        <id>Q9H869-2</id>
    </interactant>
    <interactant intactId="EBI-930964">
        <id>P54253</id>
        <label>ATXN1</label>
    </interactant>
    <organismsDiffer>false</organismsDiffer>
    <experiments>15</experiments>
</comment>
<comment type="interaction">
    <interactant intactId="EBI-12150045">
        <id>Q9H869-2</id>
    </interactant>
    <interactant intactId="EBI-466029">
        <id>P42858</id>
        <label>HTT</label>
    </interactant>
    <organismsDiffer>false</organismsDiffer>
    <experiments>3</experiments>
</comment>
<comment type="interaction">
    <interactant intactId="EBI-12150045">
        <id>Q9H869-2</id>
    </interactant>
    <interactant intactId="EBI-10962400">
        <id>Q9UHA2</id>
        <label>SS18L2</label>
    </interactant>
    <organismsDiffer>false</organismsDiffer>
    <experiments>4</experiments>
</comment>
<comment type="interaction">
    <interactant intactId="EBI-12150045">
        <id>Q9H869-2</id>
    </interactant>
    <interactant intactId="EBI-765538">
        <id>P25490</id>
        <label>YY1</label>
    </interactant>
    <organismsDiffer>false</organismsDiffer>
    <experiments>4</experiments>
</comment>
<comment type="subcellular location">
    <subcellularLocation>
        <location evidence="2 3">Cytoplasm</location>
    </subcellularLocation>
    <subcellularLocation>
        <location evidence="4 5">Nucleus</location>
    </subcellularLocation>
    <subcellularLocation>
        <location evidence="6">Nucleus</location>
        <location evidence="6">Nucleoplasm</location>
    </subcellularLocation>
    <subcellularLocation>
        <location evidence="6">Nucleus</location>
        <location evidence="6">Nucleolus</location>
    </subcellularLocation>
</comment>
<comment type="alternative products">
    <event type="alternative splicing"/>
    <isoform>
        <id>Q9H869-1</id>
        <name>1</name>
        <sequence type="displayed"/>
    </isoform>
    <isoform>
        <id>Q9H869-2</id>
        <name>2</name>
        <sequence type="described" ref="VSP_016588 VSP_016589"/>
    </isoform>
    <isoform>
        <id>Q9H869-3</id>
        <name>3</name>
        <sequence type="described" ref="VSP_016587 VSP_016589"/>
    </isoform>
    <isoform>
        <id>Q9H869-4</id>
        <name>4</name>
        <sequence type="described" ref="VSP_016588"/>
    </isoform>
    <isoform>
        <id>Q9H869-5</id>
        <name>5</name>
        <sequence type="described" ref="VSP_016586 VSP_016589"/>
    </isoform>
    <isoform>
        <id>Q9H869-6</id>
        <name>6</name>
        <name>HCCA1</name>
        <sequence type="described" ref="VSP_016587"/>
    </isoform>
    <isoform>
        <id>Q9H869-7</id>
        <name>7</name>
        <sequence type="described" ref="VSP_016585"/>
    </isoform>
    <isoform>
        <id>Q9H869-8</id>
        <name>8</name>
        <sequence type="described" ref="VSP_046858"/>
    </isoform>
    <isoform>
        <id>Q9H869-9</id>
        <name>9</name>
        <sequence type="described" ref="VSP_046858 VSP_016589"/>
    </isoform>
</comment>
<comment type="tissue specificity">
    <text evidence="2 3 4">Ubiquitous. Detected in small intestine, skeletal muscle, lung, pancreas, brain, stomach, spleen, colon and heart. Detected at very low levels in healthy liver. Highly expressed in most liver carcinomas.</text>
</comment>
<comment type="disease" evidence="6">
    <disease id="DI-04954">
        <name>Grange syndrome</name>
        <acronym>GRNG</acronym>
        <description>An autosomal recessive syndrome of stenosis or occlusion of multiple arteries, including renal, abdominal, cerebral and probably coronary arteries, congenital heart defects, brachydactyly, syndactyly, bone fragility, and learning disabilities.</description>
        <dbReference type="MIM" id="602531"/>
    </disease>
    <text>The disease is caused by variants affecting the gene represented in this entry.</text>
</comment>
<comment type="sequence caution" evidence="12">
    <conflict type="erroneous initiation">
        <sequence resource="EMBL-CDS" id="BAA91871"/>
    </conflict>
    <text>Truncated N-terminus.</text>
</comment>
<sequence length="796" mass="87944">MEEEASRSAAATNPGSRLTRWPPPDKREGSAVDPGKRRSLAATPSSSLPCTLIALGLRHEKEANELMEDLFETFQDEMGFSNMEDDGPEEEERVAEPQANFNTPQALRFEELLANLLNEQHQIAKELFEQLKMKKPSAKQQKEVEKVKPQCKEVHQTLILDPAQRKRLQQQMQQHVQLLTQIHLLATCNPNLNPEASSTRICLKELGTFAQSSIALHHQYNPKFQTLFQPCNLMGAMQLIEDFSTHVSIDCSPHKTVKKTANEFPCLPKQVAWILATSKVFMYPELLPVCSLKAKNPQDKILFTKAEDNKYLLTCKTARQLTVRIKNLNMNRAPDNIIKFYKKTKQLPVLGKCCEEIQPHQWKPPIEREEHRLPFWLKASLPSIQEELRHMADGAREVGNMTGTTEINSDQGLEKDNSELGSETRYPLLLPKGVVLKLKPVADRFPKKAWRQKRSSVLKPLLIQPSPSLQPSFNPGKTPAQSTHSEAPPSKMVLRIPHPIQPATVLQTVPGVPPLGVSGGESFESPAALPAMPPEARTSFPLSESQTLLSSAPVPKVMMPSPASSMFRKPYVRRRPSKRRGARAFRCIKPAPVIHPASVIFTVPATTVKIVSLGGGCNMIQPVNAAVAQSPQTIPIATLLVNPTSFPCPLNQPLVASSVSPLIVSGNSVNLPIPSTPEDKAHMNVDIACAVADGENAFQGLEPKLEPQELSPLSATVFPKVEHSPGPPPVDKQCQEGLSENSAYRWTVVKTEEGRQALEPLPQGIQESLNNSSPGDLEEVVKMEPEDATEEISGFL</sequence>
<protein>
    <recommendedName>
        <fullName evidence="10">YY1-associated protein 1</fullName>
    </recommendedName>
    <alternativeName>
        <fullName evidence="7">Hepatocellular carcinoma susceptibility protein</fullName>
    </alternativeName>
    <alternativeName>
        <fullName evidence="7">Hepatocellular carcinoma-associated protein 2</fullName>
    </alternativeName>
</protein>
<gene>
    <name evidence="13" type="primary">YY1AP1</name>
    <name evidence="7" type="synonym">HCCA2</name>
    <name evidence="10" type="synonym">YY1AP</name>
</gene>
<keyword id="KW-0025">Alternative splicing</keyword>
<keyword id="KW-0963">Cytoplasm</keyword>
<keyword id="KW-0539">Nucleus</keyword>
<keyword id="KW-0597">Phosphoprotein</keyword>
<keyword id="KW-1267">Proteomics identification</keyword>
<keyword id="KW-1185">Reference proteome</keyword>
<keyword id="KW-0804">Transcription</keyword>
<keyword id="KW-0805">Transcription regulation</keyword>
<name>YYAP1_HUMAN</name>
<dbReference type="EMBL" id="AF206328">
    <property type="protein sequence ID" value="AAL74055.1"/>
    <property type="molecule type" value="mRNA"/>
</dbReference>
<dbReference type="EMBL" id="AF466401">
    <property type="protein sequence ID" value="AAL75971.1"/>
    <property type="molecule type" value="mRNA"/>
</dbReference>
<dbReference type="EMBL" id="AF203474">
    <property type="protein sequence ID" value="AAO13249.1"/>
    <property type="molecule type" value="mRNA"/>
</dbReference>
<dbReference type="EMBL" id="AY604179">
    <property type="protein sequence ID" value="AAT34990.1"/>
    <property type="molecule type" value="mRNA"/>
</dbReference>
<dbReference type="EMBL" id="AK001737">
    <property type="protein sequence ID" value="BAA91871.1"/>
    <property type="status" value="ALT_INIT"/>
    <property type="molecule type" value="mRNA"/>
</dbReference>
<dbReference type="EMBL" id="AK023976">
    <property type="protein sequence ID" value="BAB14748.1"/>
    <property type="molecule type" value="mRNA"/>
</dbReference>
<dbReference type="EMBL" id="AK297562">
    <property type="protein sequence ID" value="BAG59954.1"/>
    <property type="molecule type" value="mRNA"/>
</dbReference>
<dbReference type="EMBL" id="AK303386">
    <property type="protein sequence ID" value="BAG64442.1"/>
    <property type="molecule type" value="mRNA"/>
</dbReference>
<dbReference type="EMBL" id="AL162734">
    <property type="status" value="NOT_ANNOTATED_CDS"/>
    <property type="molecule type" value="Genomic_DNA"/>
</dbReference>
<dbReference type="EMBL" id="BX088689">
    <property type="status" value="NOT_ANNOTATED_CDS"/>
    <property type="molecule type" value="Genomic_DNA"/>
</dbReference>
<dbReference type="EMBL" id="CH471121">
    <property type="protein sequence ID" value="EAW53052.1"/>
    <property type="molecule type" value="Genomic_DNA"/>
</dbReference>
<dbReference type="EMBL" id="CH471121">
    <property type="protein sequence ID" value="EAW53055.1"/>
    <property type="molecule type" value="Genomic_DNA"/>
</dbReference>
<dbReference type="EMBL" id="CH471121">
    <property type="protein sequence ID" value="EAW53056.1"/>
    <property type="molecule type" value="Genomic_DNA"/>
</dbReference>
<dbReference type="EMBL" id="CH471121">
    <property type="protein sequence ID" value="EAW53057.1"/>
    <property type="molecule type" value="Genomic_DNA"/>
</dbReference>
<dbReference type="EMBL" id="CH471121">
    <property type="protein sequence ID" value="EAW53060.1"/>
    <property type="molecule type" value="Genomic_DNA"/>
</dbReference>
<dbReference type="EMBL" id="BC001655">
    <property type="protein sequence ID" value="AAH01655.2"/>
    <property type="molecule type" value="mRNA"/>
</dbReference>
<dbReference type="EMBL" id="BC001843">
    <property type="protein sequence ID" value="AAH01843.2"/>
    <property type="molecule type" value="mRNA"/>
</dbReference>
<dbReference type="EMBL" id="BC003500">
    <property type="status" value="NOT_ANNOTATED_CDS"/>
    <property type="molecule type" value="mRNA"/>
</dbReference>
<dbReference type="EMBL" id="BC008766">
    <property type="protein sequence ID" value="AAH08766.2"/>
    <property type="molecule type" value="mRNA"/>
</dbReference>
<dbReference type="EMBL" id="BC009358">
    <property type="protein sequence ID" value="AAH09358.2"/>
    <property type="molecule type" value="mRNA"/>
</dbReference>
<dbReference type="EMBL" id="BC014906">
    <property type="protein sequence ID" value="AAH14906.1"/>
    <property type="molecule type" value="mRNA"/>
</dbReference>
<dbReference type="EMBL" id="BC025272">
    <property type="status" value="NOT_ANNOTATED_CDS"/>
    <property type="molecule type" value="mRNA"/>
</dbReference>
<dbReference type="CCDS" id="CCDS1115.1">
    <molecule id="Q9H869-1"/>
</dbReference>
<dbReference type="CCDS" id="CCDS1116.1">
    <molecule id="Q9H869-2"/>
</dbReference>
<dbReference type="CCDS" id="CCDS55643.1">
    <molecule id="Q9H869-4"/>
</dbReference>
<dbReference type="CCDS" id="CCDS55644.1">
    <molecule id="Q9H869-8"/>
</dbReference>
<dbReference type="CCDS" id="CCDS55645.1">
    <molecule id="Q9H869-9"/>
</dbReference>
<dbReference type="RefSeq" id="NP_001185828.1">
    <molecule id="Q9H869-3"/>
    <property type="nucleotide sequence ID" value="NM_001198899.2"/>
</dbReference>
<dbReference type="RefSeq" id="NP_001185829.1">
    <molecule id="Q9H869-3"/>
    <property type="nucleotide sequence ID" value="NM_001198900.2"/>
</dbReference>
<dbReference type="RefSeq" id="NP_001185830.1">
    <molecule id="Q9H869-2"/>
    <property type="nucleotide sequence ID" value="NM_001198901.2"/>
</dbReference>
<dbReference type="RefSeq" id="NP_001185831.1">
    <molecule id="Q9H869-2"/>
    <property type="nucleotide sequence ID" value="NM_001198902.2"/>
</dbReference>
<dbReference type="RefSeq" id="NP_001185832.1">
    <molecule id="Q9H869-9"/>
    <property type="nucleotide sequence ID" value="NM_001198903.1"/>
</dbReference>
<dbReference type="RefSeq" id="NP_001185833.1">
    <molecule id="Q9H869-8"/>
    <property type="nucleotide sequence ID" value="NM_001198904.1"/>
</dbReference>
<dbReference type="RefSeq" id="NP_001185834.1">
    <molecule id="Q9H869-4"/>
    <property type="nucleotide sequence ID" value="NM_001198905.2"/>
</dbReference>
<dbReference type="RefSeq" id="NP_001185835.1">
    <property type="nucleotide sequence ID" value="NM_001198906.1"/>
</dbReference>
<dbReference type="RefSeq" id="NP_060723.2">
    <molecule id="Q9H869-3"/>
    <property type="nucleotide sequence ID" value="NM_018253.3"/>
</dbReference>
<dbReference type="RefSeq" id="NP_620829.1">
    <molecule id="Q9H869-1"/>
    <property type="nucleotide sequence ID" value="NM_139118.3"/>
</dbReference>
<dbReference type="RefSeq" id="NP_620830.1">
    <molecule id="Q9H869-2"/>
    <property type="nucleotide sequence ID" value="NM_139119.3"/>
</dbReference>
<dbReference type="RefSeq" id="NP_620832.1">
    <molecule id="Q9H869-5"/>
    <property type="nucleotide sequence ID" value="NM_139121.3"/>
</dbReference>
<dbReference type="SMR" id="Q9H869"/>
<dbReference type="BioGRID" id="120540">
    <property type="interactions" value="58"/>
</dbReference>
<dbReference type="FunCoup" id="Q9H869">
    <property type="interactions" value="851"/>
</dbReference>
<dbReference type="IntAct" id="Q9H869">
    <property type="interactions" value="51"/>
</dbReference>
<dbReference type="MINT" id="Q9H869"/>
<dbReference type="STRING" id="9606.ENSP00000357323"/>
<dbReference type="GlyGen" id="Q9H869">
    <property type="glycosylation" value="1 site"/>
</dbReference>
<dbReference type="iPTMnet" id="Q9H869"/>
<dbReference type="PhosphoSitePlus" id="Q9H869"/>
<dbReference type="BioMuta" id="YY1AP1"/>
<dbReference type="DMDM" id="147744601"/>
<dbReference type="jPOST" id="Q9H869"/>
<dbReference type="MassIVE" id="Q9H869"/>
<dbReference type="PaxDb" id="9606-ENSP00000357323"/>
<dbReference type="PeptideAtlas" id="Q9H869"/>
<dbReference type="ProteomicsDB" id="43516"/>
<dbReference type="ProteomicsDB" id="65659"/>
<dbReference type="ProteomicsDB" id="81188">
    <molecule id="Q9H869-1"/>
</dbReference>
<dbReference type="ProteomicsDB" id="81189">
    <molecule id="Q9H869-2"/>
</dbReference>
<dbReference type="ProteomicsDB" id="81190">
    <molecule id="Q9H869-3"/>
</dbReference>
<dbReference type="ProteomicsDB" id="81191">
    <molecule id="Q9H869-4"/>
</dbReference>
<dbReference type="ProteomicsDB" id="81192">
    <molecule id="Q9H869-5"/>
</dbReference>
<dbReference type="ProteomicsDB" id="81193">
    <molecule id="Q9H869-6"/>
</dbReference>
<dbReference type="ProteomicsDB" id="81194">
    <molecule id="Q9H869-7"/>
</dbReference>
<dbReference type="Pumba" id="Q9H869"/>
<dbReference type="Antibodypedia" id="34199">
    <property type="antibodies" value="146 antibodies from 24 providers"/>
</dbReference>
<dbReference type="DNASU" id="55249"/>
<dbReference type="Ensembl" id="ENST00000295566.8">
    <molecule id="Q9H869-1"/>
    <property type="protein sequence ID" value="ENSP00000295566.4"/>
    <property type="gene ID" value="ENSG00000163374.21"/>
</dbReference>
<dbReference type="Ensembl" id="ENST00000311573.9">
    <molecule id="Q9H869-6"/>
    <property type="protein sequence ID" value="ENSP00000311138.5"/>
    <property type="gene ID" value="ENSG00000163374.21"/>
</dbReference>
<dbReference type="Ensembl" id="ENST00000347088.9">
    <molecule id="Q9H869-2"/>
    <property type="protein sequence ID" value="ENSP00000316079.6"/>
    <property type="gene ID" value="ENSG00000163374.21"/>
</dbReference>
<dbReference type="Ensembl" id="ENST00000355499.9">
    <molecule id="Q9H869-2"/>
    <property type="protein sequence ID" value="ENSP00000347686.4"/>
    <property type="gene ID" value="ENSG00000163374.21"/>
</dbReference>
<dbReference type="Ensembl" id="ENST00000359205.9">
    <molecule id="Q9H869-3"/>
    <property type="protein sequence ID" value="ENSP00000352134.5"/>
    <property type="gene ID" value="ENSG00000163374.21"/>
</dbReference>
<dbReference type="Ensembl" id="ENST00000361831.9">
    <molecule id="Q9H869-3"/>
    <property type="protein sequence ID" value="ENSP00000355298.5"/>
    <property type="gene ID" value="ENSG00000163374.21"/>
</dbReference>
<dbReference type="Ensembl" id="ENST00000368330.6">
    <molecule id="Q9H869-2"/>
    <property type="protein sequence ID" value="ENSP00000357314.2"/>
    <property type="gene ID" value="ENSG00000163374.21"/>
</dbReference>
<dbReference type="Ensembl" id="ENST00000368339.10">
    <molecule id="Q9H869-9"/>
    <property type="protein sequence ID" value="ENSP00000357323.5"/>
    <property type="gene ID" value="ENSG00000163374.21"/>
</dbReference>
<dbReference type="Ensembl" id="ENST00000368340.10">
    <molecule id="Q9H869-8"/>
    <property type="protein sequence ID" value="ENSP00000357324.5"/>
    <property type="gene ID" value="ENSG00000163374.21"/>
</dbReference>
<dbReference type="Ensembl" id="ENST00000404643.5">
    <molecule id="Q9H869-4"/>
    <property type="protein sequence ID" value="ENSP00000385390.1"/>
    <property type="gene ID" value="ENSG00000163374.21"/>
</dbReference>
<dbReference type="Ensembl" id="ENST00000407221.5">
    <molecule id="Q9H869-6"/>
    <property type="protein sequence ID" value="ENSP00000385791.1"/>
    <property type="gene ID" value="ENSG00000163374.21"/>
</dbReference>
<dbReference type="Ensembl" id="ENST00000443231.6">
    <molecule id="Q9H869-3"/>
    <property type="protein sequence ID" value="ENSP00000409203.2"/>
    <property type="gene ID" value="ENSG00000163374.21"/>
</dbReference>
<dbReference type="Ensembl" id="ENST00000454523.6">
    <molecule id="Q9H869-2"/>
    <property type="protein sequence ID" value="ENSP00000413240.2"/>
    <property type="gene ID" value="ENSG00000163374.21"/>
</dbReference>
<dbReference type="Ensembl" id="ENST00000714713.1">
    <molecule id="Q9H869-3"/>
    <property type="protein sequence ID" value="ENSP00000519942.1"/>
    <property type="gene ID" value="ENSG00000163374.21"/>
</dbReference>
<dbReference type="Ensembl" id="ENST00000714787.1">
    <molecule id="Q9H869-6"/>
    <property type="protein sequence ID" value="ENSP00000519995.1"/>
    <property type="gene ID" value="ENSG00000163374.21"/>
</dbReference>
<dbReference type="Ensembl" id="ENST00000714790.1">
    <molecule id="Q9H869-2"/>
    <property type="protein sequence ID" value="ENSP00000519998.1"/>
    <property type="gene ID" value="ENSG00000163374.21"/>
</dbReference>
<dbReference type="Ensembl" id="ENST00000714831.1">
    <molecule id="Q9H869-6"/>
    <property type="protein sequence ID" value="ENSP00000520032.1"/>
    <property type="gene ID" value="ENSG00000163374.21"/>
</dbReference>
<dbReference type="Ensembl" id="ENST00000715169.1">
    <molecule id="Q9H869-3"/>
    <property type="protein sequence ID" value="ENSP00000520365.1"/>
    <property type="gene ID" value="ENSG00000163374.21"/>
</dbReference>
<dbReference type="Ensembl" id="ENST00000715170.1">
    <molecule id="Q9H869-2"/>
    <property type="protein sequence ID" value="ENSP00000520366.1"/>
    <property type="gene ID" value="ENSG00000163374.21"/>
</dbReference>
<dbReference type="GeneID" id="55249"/>
<dbReference type="KEGG" id="hsa:55249"/>
<dbReference type="MANE-Select" id="ENST00000355499.9">
    <molecule id="Q9H869-2"/>
    <property type="protein sequence ID" value="ENSP00000347686.4"/>
    <property type="RefSeq nucleotide sequence ID" value="NM_139119.3"/>
    <property type="RefSeq protein sequence ID" value="NP_620830.1"/>
</dbReference>
<dbReference type="UCSC" id="uc001flh.4">
    <molecule id="Q9H869-1"/>
    <property type="organism name" value="human"/>
</dbReference>
<dbReference type="AGR" id="HGNC:30935"/>
<dbReference type="CTD" id="55249"/>
<dbReference type="DisGeNET" id="55249"/>
<dbReference type="GeneCards" id="YY1AP1"/>
<dbReference type="HGNC" id="HGNC:30935">
    <property type="gene designation" value="YY1AP1"/>
</dbReference>
<dbReference type="HPA" id="ENSG00000163374">
    <property type="expression patterns" value="Low tissue specificity"/>
</dbReference>
<dbReference type="MalaCards" id="YY1AP1"/>
<dbReference type="MIM" id="602531">
    <property type="type" value="phenotype"/>
</dbReference>
<dbReference type="MIM" id="607860">
    <property type="type" value="gene"/>
</dbReference>
<dbReference type="neXtProt" id="NX_Q9H869"/>
<dbReference type="OpenTargets" id="ENSG00000163374"/>
<dbReference type="Orphanet" id="79094">
    <property type="disease" value="Grange syndrome"/>
</dbReference>
<dbReference type="PharmGKB" id="PA142670546"/>
<dbReference type="VEuPathDB" id="HostDB:ENSG00000163374"/>
<dbReference type="eggNOG" id="ENOG502QT2W">
    <property type="taxonomic scope" value="Eukaryota"/>
</dbReference>
<dbReference type="GeneTree" id="ENSGT00390000016256"/>
<dbReference type="HOGENOM" id="CLU_384466_0_0_1"/>
<dbReference type="InParanoid" id="Q9H869"/>
<dbReference type="OMA" id="PTSFICP"/>
<dbReference type="OrthoDB" id="6257037at2759"/>
<dbReference type="PAN-GO" id="Q9H869">
    <property type="GO annotations" value="3 GO annotations based on evolutionary models"/>
</dbReference>
<dbReference type="PhylomeDB" id="Q9H869"/>
<dbReference type="TreeFam" id="TF343327"/>
<dbReference type="PathwayCommons" id="Q9H869"/>
<dbReference type="SignaLink" id="Q9H869"/>
<dbReference type="BioGRID-ORCS" id="55249">
    <property type="hits" value="15 hits in 1159 CRISPR screens"/>
</dbReference>
<dbReference type="CD-CODE" id="91857CE7">
    <property type="entry name" value="Nucleolus"/>
</dbReference>
<dbReference type="ChiTaRS" id="YY1AP1">
    <property type="organism name" value="human"/>
</dbReference>
<dbReference type="GeneWiki" id="YY1AP1"/>
<dbReference type="GenomeRNAi" id="55249"/>
<dbReference type="Pharos" id="Q9H869">
    <property type="development level" value="Tbio"/>
</dbReference>
<dbReference type="PRO" id="PR:Q9H869"/>
<dbReference type="Proteomes" id="UP000005640">
    <property type="component" value="Chromosome 1"/>
</dbReference>
<dbReference type="RNAct" id="Q9H869">
    <property type="molecule type" value="protein"/>
</dbReference>
<dbReference type="Bgee" id="ENSG00000163374">
    <property type="expression patterns" value="Expressed in calcaneal tendon and 207 other cell types or tissues"/>
</dbReference>
<dbReference type="ExpressionAtlas" id="Q9H869">
    <property type="expression patterns" value="baseline and differential"/>
</dbReference>
<dbReference type="GO" id="GO:0005737">
    <property type="term" value="C:cytoplasm"/>
    <property type="evidence" value="ECO:0007669"/>
    <property type="project" value="UniProtKB-SubCell"/>
</dbReference>
<dbReference type="GO" id="GO:0001650">
    <property type="term" value="C:fibrillar center"/>
    <property type="evidence" value="ECO:0000314"/>
    <property type="project" value="HPA"/>
</dbReference>
<dbReference type="GO" id="GO:0005730">
    <property type="term" value="C:nucleolus"/>
    <property type="evidence" value="ECO:0000314"/>
    <property type="project" value="UniProtKB"/>
</dbReference>
<dbReference type="GO" id="GO:0005654">
    <property type="term" value="C:nucleoplasm"/>
    <property type="evidence" value="ECO:0000314"/>
    <property type="project" value="UniProtKB"/>
</dbReference>
<dbReference type="GO" id="GO:0005634">
    <property type="term" value="C:nucleus"/>
    <property type="evidence" value="ECO:0000314"/>
    <property type="project" value="UniProtKB"/>
</dbReference>
<dbReference type="GO" id="GO:0030154">
    <property type="term" value="P:cell differentiation"/>
    <property type="evidence" value="ECO:0000315"/>
    <property type="project" value="UniProtKB"/>
</dbReference>
<dbReference type="GO" id="GO:0008283">
    <property type="term" value="P:cell population proliferation"/>
    <property type="evidence" value="ECO:0000315"/>
    <property type="project" value="UniProtKB"/>
</dbReference>
<dbReference type="GO" id="GO:0051726">
    <property type="term" value="P:regulation of cell cycle"/>
    <property type="evidence" value="ECO:0000314"/>
    <property type="project" value="UniProtKB"/>
</dbReference>
<dbReference type="InterPro" id="IPR052435">
    <property type="entry name" value="YY1-Transcr_Regul"/>
</dbReference>
<dbReference type="PANTHER" id="PTHR16088:SF3">
    <property type="entry name" value="GON-4-LIKE PROTEIN"/>
    <property type="match status" value="1"/>
</dbReference>
<dbReference type="PANTHER" id="PTHR16088">
    <property type="entry name" value="YY1 ASSOCIATED PROTEIN-RELATED"/>
    <property type="match status" value="1"/>
</dbReference>
<organism>
    <name type="scientific">Homo sapiens</name>
    <name type="common">Human</name>
    <dbReference type="NCBI Taxonomy" id="9606"/>
    <lineage>
        <taxon>Eukaryota</taxon>
        <taxon>Metazoa</taxon>
        <taxon>Chordata</taxon>
        <taxon>Craniata</taxon>
        <taxon>Vertebrata</taxon>
        <taxon>Euteleostomi</taxon>
        <taxon>Mammalia</taxon>
        <taxon>Eutheria</taxon>
        <taxon>Euarchontoglires</taxon>
        <taxon>Primates</taxon>
        <taxon>Haplorrhini</taxon>
        <taxon>Catarrhini</taxon>
        <taxon>Hominidae</taxon>
        <taxon>Homo</taxon>
    </lineage>
</organism>